<organism>
    <name type="scientific">Mus musculus</name>
    <name type="common">Mouse</name>
    <dbReference type="NCBI Taxonomy" id="10090"/>
    <lineage>
        <taxon>Eukaryota</taxon>
        <taxon>Metazoa</taxon>
        <taxon>Chordata</taxon>
        <taxon>Craniata</taxon>
        <taxon>Vertebrata</taxon>
        <taxon>Euteleostomi</taxon>
        <taxon>Mammalia</taxon>
        <taxon>Eutheria</taxon>
        <taxon>Euarchontoglires</taxon>
        <taxon>Glires</taxon>
        <taxon>Rodentia</taxon>
        <taxon>Myomorpha</taxon>
        <taxon>Muroidea</taxon>
        <taxon>Muridae</taxon>
        <taxon>Murinae</taxon>
        <taxon>Mus</taxon>
        <taxon>Mus</taxon>
    </lineage>
</organism>
<proteinExistence type="evidence at transcript level"/>
<evidence type="ECO:0000250" key="1"/>
<evidence type="ECO:0000255" key="2"/>
<evidence type="ECO:0000255" key="3">
    <source>
        <dbReference type="PROSITE-ProRule" id="PRU00521"/>
    </source>
</evidence>
<evidence type="ECO:0000305" key="4"/>
<keyword id="KW-1003">Cell membrane</keyword>
<keyword id="KW-1015">Disulfide bond</keyword>
<keyword id="KW-0297">G-protein coupled receptor</keyword>
<keyword id="KW-0325">Glycoprotein</keyword>
<keyword id="KW-0472">Membrane</keyword>
<keyword id="KW-0675">Receptor</keyword>
<keyword id="KW-1185">Reference proteome</keyword>
<keyword id="KW-0807">Transducer</keyword>
<keyword id="KW-0812">Transmembrane</keyword>
<keyword id="KW-1133">Transmembrane helix</keyword>
<reference key="1">
    <citation type="journal article" date="2005" name="Science">
        <title>The transcriptional landscape of the mammalian genome.</title>
        <authorList>
            <person name="Carninci P."/>
            <person name="Kasukawa T."/>
            <person name="Katayama S."/>
            <person name="Gough J."/>
            <person name="Frith M.C."/>
            <person name="Maeda N."/>
            <person name="Oyama R."/>
            <person name="Ravasi T."/>
            <person name="Lenhard B."/>
            <person name="Wells C."/>
            <person name="Kodzius R."/>
            <person name="Shimokawa K."/>
            <person name="Bajic V.B."/>
            <person name="Brenner S.E."/>
            <person name="Batalov S."/>
            <person name="Forrest A.R."/>
            <person name="Zavolan M."/>
            <person name="Davis M.J."/>
            <person name="Wilming L.G."/>
            <person name="Aidinis V."/>
            <person name="Allen J.E."/>
            <person name="Ambesi-Impiombato A."/>
            <person name="Apweiler R."/>
            <person name="Aturaliya R.N."/>
            <person name="Bailey T.L."/>
            <person name="Bansal M."/>
            <person name="Baxter L."/>
            <person name="Beisel K.W."/>
            <person name="Bersano T."/>
            <person name="Bono H."/>
            <person name="Chalk A.M."/>
            <person name="Chiu K.P."/>
            <person name="Choudhary V."/>
            <person name="Christoffels A."/>
            <person name="Clutterbuck D.R."/>
            <person name="Crowe M.L."/>
            <person name="Dalla E."/>
            <person name="Dalrymple B.P."/>
            <person name="de Bono B."/>
            <person name="Della Gatta G."/>
            <person name="di Bernardo D."/>
            <person name="Down T."/>
            <person name="Engstrom P."/>
            <person name="Fagiolini M."/>
            <person name="Faulkner G."/>
            <person name="Fletcher C.F."/>
            <person name="Fukushima T."/>
            <person name="Furuno M."/>
            <person name="Futaki S."/>
            <person name="Gariboldi M."/>
            <person name="Georgii-Hemming P."/>
            <person name="Gingeras T.R."/>
            <person name="Gojobori T."/>
            <person name="Green R.E."/>
            <person name="Gustincich S."/>
            <person name="Harbers M."/>
            <person name="Hayashi Y."/>
            <person name="Hensch T.K."/>
            <person name="Hirokawa N."/>
            <person name="Hill D."/>
            <person name="Huminiecki L."/>
            <person name="Iacono M."/>
            <person name="Ikeo K."/>
            <person name="Iwama A."/>
            <person name="Ishikawa T."/>
            <person name="Jakt M."/>
            <person name="Kanapin A."/>
            <person name="Katoh M."/>
            <person name="Kawasawa Y."/>
            <person name="Kelso J."/>
            <person name="Kitamura H."/>
            <person name="Kitano H."/>
            <person name="Kollias G."/>
            <person name="Krishnan S.P."/>
            <person name="Kruger A."/>
            <person name="Kummerfeld S.K."/>
            <person name="Kurochkin I.V."/>
            <person name="Lareau L.F."/>
            <person name="Lazarevic D."/>
            <person name="Lipovich L."/>
            <person name="Liu J."/>
            <person name="Liuni S."/>
            <person name="McWilliam S."/>
            <person name="Madan Babu M."/>
            <person name="Madera M."/>
            <person name="Marchionni L."/>
            <person name="Matsuda H."/>
            <person name="Matsuzawa S."/>
            <person name="Miki H."/>
            <person name="Mignone F."/>
            <person name="Miyake S."/>
            <person name="Morris K."/>
            <person name="Mottagui-Tabar S."/>
            <person name="Mulder N."/>
            <person name="Nakano N."/>
            <person name="Nakauchi H."/>
            <person name="Ng P."/>
            <person name="Nilsson R."/>
            <person name="Nishiguchi S."/>
            <person name="Nishikawa S."/>
            <person name="Nori F."/>
            <person name="Ohara O."/>
            <person name="Okazaki Y."/>
            <person name="Orlando V."/>
            <person name="Pang K.C."/>
            <person name="Pavan W.J."/>
            <person name="Pavesi G."/>
            <person name="Pesole G."/>
            <person name="Petrovsky N."/>
            <person name="Piazza S."/>
            <person name="Reed J."/>
            <person name="Reid J.F."/>
            <person name="Ring B.Z."/>
            <person name="Ringwald M."/>
            <person name="Rost B."/>
            <person name="Ruan Y."/>
            <person name="Salzberg S.L."/>
            <person name="Sandelin A."/>
            <person name="Schneider C."/>
            <person name="Schoenbach C."/>
            <person name="Sekiguchi K."/>
            <person name="Semple C.A."/>
            <person name="Seno S."/>
            <person name="Sessa L."/>
            <person name="Sheng Y."/>
            <person name="Shibata Y."/>
            <person name="Shimada H."/>
            <person name="Shimada K."/>
            <person name="Silva D."/>
            <person name="Sinclair B."/>
            <person name="Sperling S."/>
            <person name="Stupka E."/>
            <person name="Sugiura K."/>
            <person name="Sultana R."/>
            <person name="Takenaka Y."/>
            <person name="Taki K."/>
            <person name="Tammoja K."/>
            <person name="Tan S.L."/>
            <person name="Tang S."/>
            <person name="Taylor M.S."/>
            <person name="Tegner J."/>
            <person name="Teichmann S.A."/>
            <person name="Ueda H.R."/>
            <person name="van Nimwegen E."/>
            <person name="Verardo R."/>
            <person name="Wei C.L."/>
            <person name="Yagi K."/>
            <person name="Yamanishi H."/>
            <person name="Zabarovsky E."/>
            <person name="Zhu S."/>
            <person name="Zimmer A."/>
            <person name="Hide W."/>
            <person name="Bult C."/>
            <person name="Grimmond S.M."/>
            <person name="Teasdale R.D."/>
            <person name="Liu E.T."/>
            <person name="Brusic V."/>
            <person name="Quackenbush J."/>
            <person name="Wahlestedt C."/>
            <person name="Mattick J.S."/>
            <person name="Hume D.A."/>
            <person name="Kai C."/>
            <person name="Sasaki D."/>
            <person name="Tomaru Y."/>
            <person name="Fukuda S."/>
            <person name="Kanamori-Katayama M."/>
            <person name="Suzuki M."/>
            <person name="Aoki J."/>
            <person name="Arakawa T."/>
            <person name="Iida J."/>
            <person name="Imamura K."/>
            <person name="Itoh M."/>
            <person name="Kato T."/>
            <person name="Kawaji H."/>
            <person name="Kawagashira N."/>
            <person name="Kawashima T."/>
            <person name="Kojima M."/>
            <person name="Kondo S."/>
            <person name="Konno H."/>
            <person name="Nakano K."/>
            <person name="Ninomiya N."/>
            <person name="Nishio T."/>
            <person name="Okada M."/>
            <person name="Plessy C."/>
            <person name="Shibata K."/>
            <person name="Shiraki T."/>
            <person name="Suzuki S."/>
            <person name="Tagami M."/>
            <person name="Waki K."/>
            <person name="Watahiki A."/>
            <person name="Okamura-Oho Y."/>
            <person name="Suzuki H."/>
            <person name="Kawai J."/>
            <person name="Hayashizaki Y."/>
        </authorList>
    </citation>
    <scope>NUCLEOTIDE SEQUENCE [LARGE SCALE MRNA]</scope>
    <source>
        <strain>C57BL/6J</strain>
        <tissue>Spinal cord</tissue>
    </source>
</reference>
<reference key="2">
    <citation type="submission" date="2001-09" db="EMBL/GenBank/DDBJ databases">
        <title>Cloning of mouse ghrelin/growth hormone secretagogue receptor cDNA by rapid amplification of cDNA ends (RACE).</title>
        <authorList>
            <person name="Kacsoh B."/>
        </authorList>
    </citation>
    <scope>NUCLEOTIDE SEQUENCE [MRNA] OF 1-183</scope>
    <source>
        <strain>C57BL/6J</strain>
        <tissue>Hypothalamus</tissue>
    </source>
</reference>
<reference key="3">
    <citation type="submission" date="2001-01" db="EMBL/GenBank/DDBJ databases">
        <authorList>
            <person name="Peng X."/>
            <person name="Frohman L.A."/>
            <person name="Kineman R.D."/>
        </authorList>
    </citation>
    <scope>NUCLEOTIDE SEQUENCE [MRNA] OF 73-257</scope>
    <source>
        <strain>129S1/SvImJ</strain>
    </source>
</reference>
<accession>Q99P50</accession>
<accession>Q8BWX8</accession>
<accession>Q91Z82</accession>
<comment type="function">
    <text evidence="1">Receptor for ghrelin, coupled to G-alpha-11 proteins. Stimulates growth hormone secretion. Also binds other growth hormone releasing peptides (GHRP) (e.g. Met-enkephalin and GHRP-6) as well as non-peptide, low molecular weight secretagogues (e.g. L-692,429, MK-0677, adenosine) (By similarity).</text>
</comment>
<comment type="subcellular location">
    <subcellularLocation>
        <location>Cell membrane</location>
        <topology>Multi-pass membrane protein</topology>
    </subcellularLocation>
</comment>
<comment type="similarity">
    <text evidence="3">Belongs to the G-protein coupled receptor 1 family.</text>
</comment>
<gene>
    <name type="primary">Ghsr</name>
</gene>
<feature type="chain" id="PRO_0000069480" description="Growth hormone secretagogue receptor type 1">
    <location>
        <begin position="1"/>
        <end position="364"/>
    </location>
</feature>
<feature type="topological domain" description="Extracellular" evidence="2">
    <location>
        <begin position="1"/>
        <end position="40"/>
    </location>
</feature>
<feature type="transmembrane region" description="Helical; Name=1" evidence="2">
    <location>
        <begin position="41"/>
        <end position="66"/>
    </location>
</feature>
<feature type="topological domain" description="Cytoplasmic" evidence="2">
    <location>
        <begin position="67"/>
        <end position="72"/>
    </location>
</feature>
<feature type="transmembrane region" description="Helical; Name=2" evidence="2">
    <location>
        <begin position="73"/>
        <end position="96"/>
    </location>
</feature>
<feature type="topological domain" description="Extracellular" evidence="2">
    <location>
        <begin position="97"/>
        <end position="117"/>
    </location>
</feature>
<feature type="transmembrane region" description="Helical; Name=3" evidence="2">
    <location>
        <begin position="118"/>
        <end position="139"/>
    </location>
</feature>
<feature type="topological domain" description="Cytoplasmic" evidence="2">
    <location>
        <begin position="140"/>
        <end position="162"/>
    </location>
</feature>
<feature type="transmembrane region" description="Helical; Name=4" evidence="2">
    <location>
        <begin position="163"/>
        <end position="183"/>
    </location>
</feature>
<feature type="topological domain" description="Extracellular" evidence="2">
    <location>
        <begin position="184"/>
        <end position="211"/>
    </location>
</feature>
<feature type="transmembrane region" description="Helical; Name=5" evidence="2">
    <location>
        <begin position="212"/>
        <end position="235"/>
    </location>
</feature>
<feature type="topological domain" description="Cytoplasmic" evidence="2">
    <location>
        <begin position="236"/>
        <end position="263"/>
    </location>
</feature>
<feature type="transmembrane region" description="Helical; Name=6" evidence="2">
    <location>
        <begin position="264"/>
        <end position="285"/>
    </location>
</feature>
<feature type="topological domain" description="Extracellular" evidence="2">
    <location>
        <begin position="286"/>
        <end position="302"/>
    </location>
</feature>
<feature type="transmembrane region" description="Helical; Name=7" evidence="2">
    <location>
        <begin position="303"/>
        <end position="326"/>
    </location>
</feature>
<feature type="topological domain" description="Cytoplasmic" evidence="2">
    <location>
        <begin position="327"/>
        <end position="364"/>
    </location>
</feature>
<feature type="glycosylation site" description="N-linked (GlcNAc...) asparagine" evidence="2">
    <location>
        <position position="13"/>
    </location>
</feature>
<feature type="glycosylation site" description="N-linked (GlcNAc...) asparagine" evidence="2">
    <location>
        <position position="26"/>
    </location>
</feature>
<feature type="glycosylation site" description="N-linked (GlcNAc...) asparagine" evidence="2">
    <location>
        <position position="187"/>
    </location>
</feature>
<feature type="disulfide bond" evidence="3">
    <location>
        <begin position="115"/>
        <end position="197"/>
    </location>
</feature>
<feature type="sequence conflict" description="In Ref. 2; AAL13336." evidence="4" ref="2">
    <original>G</original>
    <variation>S</variation>
    <location>
        <position position="59"/>
    </location>
</feature>
<sequence length="364" mass="40969">MWNATPSEEPEPNVTLDLDWDASPGNDSLSDELLPLFPAPLLAGVTATCVALFVVGISGNLLTMLVVSRFRELRTTTNLYLSSMAFSDLLIFLCMPLDLVRLWQYRPWNFGDLLCKLFQFVSESCTYATVLTITALSVERYFAICFPLRAKVVVTKGRVKLVILVIWAVAFCSAGPIFVLVGVEHENGTDPRDTNECRATEFAVRSGLLTVMVWVSSVFFFLPVFCLTVLYSLIGRKLWRRRGDAAVGSSLRDQNHKQTVKMLAVVVFAFILCWLPFHVGRYLFSKSFEPGSLEIAQISQYCNLVSFVLFYLSAAINPILYNIMSKKYRVAVFKLLGFESFSQRKLSTLKDESSRAWTKSSINT</sequence>
<dbReference type="EMBL" id="AK049671">
    <property type="protein sequence ID" value="BAC33866.1"/>
    <property type="molecule type" value="mRNA"/>
</dbReference>
<dbReference type="EMBL" id="AY056474">
    <property type="protein sequence ID" value="AAL13336.1"/>
    <property type="molecule type" value="mRNA"/>
</dbReference>
<dbReference type="EMBL" id="AF332997">
    <property type="protein sequence ID" value="AAG61141.1"/>
    <property type="molecule type" value="mRNA"/>
</dbReference>
<dbReference type="CCDS" id="CCDS17273.1"/>
<dbReference type="RefSeq" id="NP_796304.1">
    <property type="nucleotide sequence ID" value="NM_177330.4"/>
</dbReference>
<dbReference type="SMR" id="Q99P50"/>
<dbReference type="CORUM" id="Q99P50"/>
<dbReference type="FunCoup" id="Q99P50">
    <property type="interactions" value="741"/>
</dbReference>
<dbReference type="STRING" id="10090.ENSMUSP00000061153"/>
<dbReference type="ChEMBL" id="CHEMBL3428"/>
<dbReference type="GuidetoPHARMACOLOGY" id="246"/>
<dbReference type="GlyCosmos" id="Q99P50">
    <property type="glycosylation" value="3 sites, No reported glycans"/>
</dbReference>
<dbReference type="GlyGen" id="Q99P50">
    <property type="glycosylation" value="3 sites"/>
</dbReference>
<dbReference type="PhosphoSitePlus" id="Q99P50"/>
<dbReference type="PaxDb" id="10090-ENSMUSP00000061153"/>
<dbReference type="Antibodypedia" id="3248">
    <property type="antibodies" value="283 antibodies from 32 providers"/>
</dbReference>
<dbReference type="DNASU" id="208188"/>
<dbReference type="Ensembl" id="ENSMUST00000057186.2">
    <property type="protein sequence ID" value="ENSMUSP00000061153.2"/>
    <property type="gene ID" value="ENSMUSG00000051136.2"/>
</dbReference>
<dbReference type="GeneID" id="208188"/>
<dbReference type="KEGG" id="mmu:208188"/>
<dbReference type="UCSC" id="uc008oto.1">
    <property type="organism name" value="mouse"/>
</dbReference>
<dbReference type="AGR" id="MGI:2441906"/>
<dbReference type="CTD" id="2693"/>
<dbReference type="MGI" id="MGI:2441906">
    <property type="gene designation" value="Ghsr"/>
</dbReference>
<dbReference type="VEuPathDB" id="HostDB:ENSMUSG00000051136"/>
<dbReference type="eggNOG" id="KOG3656">
    <property type="taxonomic scope" value="Eukaryota"/>
</dbReference>
<dbReference type="GeneTree" id="ENSGT01130000278335"/>
<dbReference type="HOGENOM" id="CLU_009579_6_5_1"/>
<dbReference type="InParanoid" id="Q99P50"/>
<dbReference type="OMA" id="IGNLMTM"/>
<dbReference type="OrthoDB" id="10011262at2759"/>
<dbReference type="PhylomeDB" id="Q99P50"/>
<dbReference type="TreeFam" id="TF332184"/>
<dbReference type="Reactome" id="R-MMU-416476">
    <property type="pathway name" value="G alpha (q) signalling events"/>
</dbReference>
<dbReference type="BioGRID-ORCS" id="208188">
    <property type="hits" value="2 hits in 78 CRISPR screens"/>
</dbReference>
<dbReference type="PRO" id="PR:Q99P50"/>
<dbReference type="Proteomes" id="UP000000589">
    <property type="component" value="Chromosome 3"/>
</dbReference>
<dbReference type="RNAct" id="Q99P50">
    <property type="molecule type" value="protein"/>
</dbReference>
<dbReference type="Bgee" id="ENSMUSG00000051136">
    <property type="expression patterns" value="Expressed in median eminence of neurohypophysis and 13 other cell types or tissues"/>
</dbReference>
<dbReference type="ExpressionAtlas" id="Q99P50">
    <property type="expression patterns" value="baseline and differential"/>
</dbReference>
<dbReference type="GO" id="GO:0009986">
    <property type="term" value="C:cell surface"/>
    <property type="evidence" value="ECO:0000250"/>
    <property type="project" value="HGNC-UCL"/>
</dbReference>
<dbReference type="GO" id="GO:0098978">
    <property type="term" value="C:glutamatergic synapse"/>
    <property type="evidence" value="ECO:0007669"/>
    <property type="project" value="Ensembl"/>
</dbReference>
<dbReference type="GO" id="GO:0045121">
    <property type="term" value="C:membrane raft"/>
    <property type="evidence" value="ECO:0000250"/>
    <property type="project" value="UniProtKB"/>
</dbReference>
<dbReference type="GO" id="GO:0043005">
    <property type="term" value="C:neuron projection"/>
    <property type="evidence" value="ECO:0000250"/>
    <property type="project" value="UniProtKB"/>
</dbReference>
<dbReference type="GO" id="GO:0098794">
    <property type="term" value="C:postsynapse"/>
    <property type="evidence" value="ECO:0007669"/>
    <property type="project" value="GOC"/>
</dbReference>
<dbReference type="GO" id="GO:0098685">
    <property type="term" value="C:Schaffer collateral - CA1 synapse"/>
    <property type="evidence" value="ECO:0007669"/>
    <property type="project" value="Ensembl"/>
</dbReference>
<dbReference type="GO" id="GO:0097060">
    <property type="term" value="C:synaptic membrane"/>
    <property type="evidence" value="ECO:0007669"/>
    <property type="project" value="Ensembl"/>
</dbReference>
<dbReference type="GO" id="GO:0004930">
    <property type="term" value="F:G protein-coupled receptor activity"/>
    <property type="evidence" value="ECO:0000250"/>
    <property type="project" value="UniProtKB"/>
</dbReference>
<dbReference type="GO" id="GO:0001616">
    <property type="term" value="F:growth hormone secretagogue receptor activity"/>
    <property type="evidence" value="ECO:0000250"/>
    <property type="project" value="HGNC-UCL"/>
</dbReference>
<dbReference type="GO" id="GO:0016520">
    <property type="term" value="F:growth hormone-releasing hormone receptor activity"/>
    <property type="evidence" value="ECO:0000250"/>
    <property type="project" value="HGNC-UCL"/>
</dbReference>
<dbReference type="GO" id="GO:0017046">
    <property type="term" value="F:peptide hormone binding"/>
    <property type="evidence" value="ECO:0007669"/>
    <property type="project" value="Ensembl"/>
</dbReference>
<dbReference type="GO" id="GO:0008154">
    <property type="term" value="P:actin polymerization or depolymerization"/>
    <property type="evidence" value="ECO:0000250"/>
    <property type="project" value="UniProtKB"/>
</dbReference>
<dbReference type="GO" id="GO:0008343">
    <property type="term" value="P:adult feeding behavior"/>
    <property type="evidence" value="ECO:0000315"/>
    <property type="project" value="HGNC-UCL"/>
</dbReference>
<dbReference type="GO" id="GO:0032869">
    <property type="term" value="P:cellular response to insulin stimulus"/>
    <property type="evidence" value="ECO:0000314"/>
    <property type="project" value="MGI"/>
</dbReference>
<dbReference type="GO" id="GO:1990314">
    <property type="term" value="P:cellular response to insulin-like growth factor stimulus"/>
    <property type="evidence" value="ECO:0007669"/>
    <property type="project" value="Ensembl"/>
</dbReference>
<dbReference type="GO" id="GO:0071222">
    <property type="term" value="P:cellular response to lipopolysaccharide"/>
    <property type="evidence" value="ECO:0007669"/>
    <property type="project" value="Ensembl"/>
</dbReference>
<dbReference type="GO" id="GO:0097067">
    <property type="term" value="P:cellular response to thyroid hormone stimulus"/>
    <property type="evidence" value="ECO:0007669"/>
    <property type="project" value="Ensembl"/>
</dbReference>
<dbReference type="GO" id="GO:0046697">
    <property type="term" value="P:decidualization"/>
    <property type="evidence" value="ECO:0000250"/>
    <property type="project" value="UniProtKB"/>
</dbReference>
<dbReference type="GO" id="GO:0007186">
    <property type="term" value="P:G protein-coupled receptor signaling pathway"/>
    <property type="evidence" value="ECO:0000250"/>
    <property type="project" value="HGNC-UCL"/>
</dbReference>
<dbReference type="GO" id="GO:0036321">
    <property type="term" value="P:ghrelin secretion"/>
    <property type="evidence" value="ECO:0007669"/>
    <property type="project" value="Ensembl"/>
</dbReference>
<dbReference type="GO" id="GO:0030252">
    <property type="term" value="P:growth hormone secretion"/>
    <property type="evidence" value="ECO:0000316"/>
    <property type="project" value="MGI"/>
</dbReference>
<dbReference type="GO" id="GO:0009755">
    <property type="term" value="P:hormone-mediated signaling pathway"/>
    <property type="evidence" value="ECO:0000250"/>
    <property type="project" value="HGNC-UCL"/>
</dbReference>
<dbReference type="GO" id="GO:0048009">
    <property type="term" value="P:insulin-like growth factor receptor signaling pathway"/>
    <property type="evidence" value="ECO:0000315"/>
    <property type="project" value="MGI"/>
</dbReference>
<dbReference type="GO" id="GO:0007611">
    <property type="term" value="P:learning or memory"/>
    <property type="evidence" value="ECO:0007669"/>
    <property type="project" value="Ensembl"/>
</dbReference>
<dbReference type="GO" id="GO:0032099">
    <property type="term" value="P:negative regulation of appetite"/>
    <property type="evidence" value="ECO:0007669"/>
    <property type="project" value="Ensembl"/>
</dbReference>
<dbReference type="GO" id="GO:0050728">
    <property type="term" value="P:negative regulation of inflammatory response"/>
    <property type="evidence" value="ECO:0000250"/>
    <property type="project" value="UniProtKB"/>
</dbReference>
<dbReference type="GO" id="GO:0046676">
    <property type="term" value="P:negative regulation of insulin secretion"/>
    <property type="evidence" value="ECO:0000266"/>
    <property type="project" value="MGI"/>
</dbReference>
<dbReference type="GO" id="GO:0032691">
    <property type="term" value="P:negative regulation of interleukin-1 beta production"/>
    <property type="evidence" value="ECO:0000250"/>
    <property type="project" value="UniProtKB"/>
</dbReference>
<dbReference type="GO" id="GO:0032715">
    <property type="term" value="P:negative regulation of interleukin-6 production"/>
    <property type="evidence" value="ECO:0000250"/>
    <property type="project" value="UniProtKB"/>
</dbReference>
<dbReference type="GO" id="GO:0090327">
    <property type="term" value="P:negative regulation of locomotion involved in locomotory behavior"/>
    <property type="evidence" value="ECO:0007669"/>
    <property type="project" value="Ensembl"/>
</dbReference>
<dbReference type="GO" id="GO:2000110">
    <property type="term" value="P:negative regulation of macrophage apoptotic process"/>
    <property type="evidence" value="ECO:0007669"/>
    <property type="project" value="Ensembl"/>
</dbReference>
<dbReference type="GO" id="GO:0010700">
    <property type="term" value="P:negative regulation of norepinephrine secretion"/>
    <property type="evidence" value="ECO:0007669"/>
    <property type="project" value="Ensembl"/>
</dbReference>
<dbReference type="GO" id="GO:0032720">
    <property type="term" value="P:negative regulation of tumor necrosis factor production"/>
    <property type="evidence" value="ECO:0000250"/>
    <property type="project" value="UniProtKB"/>
</dbReference>
<dbReference type="GO" id="GO:0032100">
    <property type="term" value="P:positive regulation of appetite"/>
    <property type="evidence" value="ECO:0000315"/>
    <property type="project" value="HGNC-UCL"/>
</dbReference>
<dbReference type="GO" id="GO:1904000">
    <property type="term" value="P:positive regulation of eating behavior"/>
    <property type="evidence" value="ECO:0007669"/>
    <property type="project" value="Ensembl"/>
</dbReference>
<dbReference type="GO" id="GO:0045923">
    <property type="term" value="P:positive regulation of fatty acid metabolic process"/>
    <property type="evidence" value="ECO:0007669"/>
    <property type="project" value="Ensembl"/>
</dbReference>
<dbReference type="GO" id="GO:0043568">
    <property type="term" value="P:positive regulation of insulin-like growth factor receptor signaling pathway"/>
    <property type="evidence" value="ECO:0000315"/>
    <property type="project" value="MGI"/>
</dbReference>
<dbReference type="GO" id="GO:0040018">
    <property type="term" value="P:positive regulation of multicellular organism growth"/>
    <property type="evidence" value="ECO:0000250"/>
    <property type="project" value="HGNC-UCL"/>
</dbReference>
<dbReference type="GO" id="GO:0120058">
    <property type="term" value="P:positive regulation of small intestinal transit"/>
    <property type="evidence" value="ECO:0007669"/>
    <property type="project" value="Ensembl"/>
</dbReference>
<dbReference type="GO" id="GO:1904349">
    <property type="term" value="P:positive regulation of small intestine smooth muscle contraction"/>
    <property type="evidence" value="ECO:0007669"/>
    <property type="project" value="Ensembl"/>
</dbReference>
<dbReference type="GO" id="GO:1903672">
    <property type="term" value="P:positive regulation of sprouting angiogenesis"/>
    <property type="evidence" value="ECO:0007669"/>
    <property type="project" value="Ensembl"/>
</dbReference>
<dbReference type="GO" id="GO:1905564">
    <property type="term" value="P:positive regulation of vascular endothelial cell proliferation"/>
    <property type="evidence" value="ECO:0007669"/>
    <property type="project" value="Ensembl"/>
</dbReference>
<dbReference type="GO" id="GO:0099170">
    <property type="term" value="P:postsynaptic modulation of chemical synaptic transmission"/>
    <property type="evidence" value="ECO:0007669"/>
    <property type="project" value="Ensembl"/>
</dbReference>
<dbReference type="GO" id="GO:1905333">
    <property type="term" value="P:regulation of gastric motility"/>
    <property type="evidence" value="ECO:0007669"/>
    <property type="project" value="Ensembl"/>
</dbReference>
<dbReference type="GO" id="GO:0060123">
    <property type="term" value="P:regulation of growth hormone secretion"/>
    <property type="evidence" value="ECO:0007669"/>
    <property type="project" value="Ensembl"/>
</dbReference>
<dbReference type="GO" id="GO:0043134">
    <property type="term" value="P:regulation of hindgut contraction"/>
    <property type="evidence" value="ECO:0007669"/>
    <property type="project" value="Ensembl"/>
</dbReference>
<dbReference type="GO" id="GO:0098696">
    <property type="term" value="P:regulation of neurotransmitter receptor localization to postsynaptic specialization membrane"/>
    <property type="evidence" value="ECO:0007669"/>
    <property type="project" value="Ensembl"/>
</dbReference>
<dbReference type="GO" id="GO:0099175">
    <property type="term" value="P:regulation of postsynapse organization"/>
    <property type="evidence" value="ECO:0007669"/>
    <property type="project" value="Ensembl"/>
</dbReference>
<dbReference type="GO" id="GO:0051963">
    <property type="term" value="P:regulation of synapse assembly"/>
    <property type="evidence" value="ECO:0000315"/>
    <property type="project" value="MGI"/>
</dbReference>
<dbReference type="GO" id="GO:0051969">
    <property type="term" value="P:regulation of transmission of nerve impulse"/>
    <property type="evidence" value="ECO:0007669"/>
    <property type="project" value="Ensembl"/>
</dbReference>
<dbReference type="GO" id="GO:0071548">
    <property type="term" value="P:response to dexamethasone"/>
    <property type="evidence" value="ECO:0007669"/>
    <property type="project" value="Ensembl"/>
</dbReference>
<dbReference type="GO" id="GO:0032355">
    <property type="term" value="P:response to estradiol"/>
    <property type="evidence" value="ECO:0007669"/>
    <property type="project" value="Ensembl"/>
</dbReference>
<dbReference type="GO" id="GO:0032354">
    <property type="term" value="P:response to follicle-stimulating hormone"/>
    <property type="evidence" value="ECO:0007669"/>
    <property type="project" value="Ensembl"/>
</dbReference>
<dbReference type="GO" id="GO:0032094">
    <property type="term" value="P:response to food"/>
    <property type="evidence" value="ECO:0000314"/>
    <property type="project" value="MGI"/>
</dbReference>
<dbReference type="GO" id="GO:0060416">
    <property type="term" value="P:response to growth hormone"/>
    <property type="evidence" value="ECO:0007669"/>
    <property type="project" value="Ensembl"/>
</dbReference>
<dbReference type="GO" id="GO:0009725">
    <property type="term" value="P:response to hormone"/>
    <property type="evidence" value="ECO:0000250"/>
    <property type="project" value="UniProtKB"/>
</dbReference>
<dbReference type="GO" id="GO:1902065">
    <property type="term" value="P:response to L-glutamate"/>
    <property type="evidence" value="ECO:0007669"/>
    <property type="project" value="Ensembl"/>
</dbReference>
<dbReference type="GO" id="GO:0007283">
    <property type="term" value="P:spermatogenesis"/>
    <property type="evidence" value="ECO:0007669"/>
    <property type="project" value="Ensembl"/>
</dbReference>
<dbReference type="CDD" id="cd15131">
    <property type="entry name" value="7tmA_GHSR"/>
    <property type="match status" value="1"/>
</dbReference>
<dbReference type="FunFam" id="1.20.1070.10:FF:000125">
    <property type="entry name" value="growth hormone secretagogue receptor type 1"/>
    <property type="match status" value="1"/>
</dbReference>
<dbReference type="Gene3D" id="1.20.1070.10">
    <property type="entry name" value="Rhodopsin 7-helix transmembrane proteins"/>
    <property type="match status" value="1"/>
</dbReference>
<dbReference type="InterPro" id="IPR003905">
    <property type="entry name" value="GHS-R/MTLR"/>
</dbReference>
<dbReference type="InterPro" id="IPR000276">
    <property type="entry name" value="GPCR_Rhodpsn"/>
</dbReference>
<dbReference type="InterPro" id="IPR017452">
    <property type="entry name" value="GPCR_Rhodpsn_7TM"/>
</dbReference>
<dbReference type="PANTHER" id="PTHR24243">
    <property type="entry name" value="G-PROTEIN COUPLED RECEPTOR"/>
    <property type="match status" value="1"/>
</dbReference>
<dbReference type="PANTHER" id="PTHR24243:SF7">
    <property type="entry name" value="GROWTH HORMONE SECRETAGOGUE RECEPTOR TYPE 1"/>
    <property type="match status" value="1"/>
</dbReference>
<dbReference type="Pfam" id="PF00001">
    <property type="entry name" value="7tm_1"/>
    <property type="match status" value="1"/>
</dbReference>
<dbReference type="PRINTS" id="PR01417">
    <property type="entry name" value="GHSRECEPTOR"/>
</dbReference>
<dbReference type="PRINTS" id="PR00237">
    <property type="entry name" value="GPCRRHODOPSN"/>
</dbReference>
<dbReference type="SUPFAM" id="SSF81321">
    <property type="entry name" value="Family A G protein-coupled receptor-like"/>
    <property type="match status" value="1"/>
</dbReference>
<dbReference type="PROSITE" id="PS00237">
    <property type="entry name" value="G_PROTEIN_RECEP_F1_1"/>
    <property type="match status" value="1"/>
</dbReference>
<dbReference type="PROSITE" id="PS50262">
    <property type="entry name" value="G_PROTEIN_RECEP_F1_2"/>
    <property type="match status" value="1"/>
</dbReference>
<name>GHSR_MOUSE</name>
<protein>
    <recommendedName>
        <fullName>Growth hormone secretagogue receptor type 1</fullName>
        <shortName>GHS-R</shortName>
    </recommendedName>
    <alternativeName>
        <fullName>GH-releasing peptide receptor</fullName>
        <shortName>GHRP</shortName>
    </alternativeName>
    <alternativeName>
        <fullName>Ghrelin receptor</fullName>
    </alternativeName>
</protein>